<organism>
    <name type="scientific">Homo sapiens</name>
    <name type="common">Human</name>
    <dbReference type="NCBI Taxonomy" id="9606"/>
    <lineage>
        <taxon>Eukaryota</taxon>
        <taxon>Metazoa</taxon>
        <taxon>Chordata</taxon>
        <taxon>Craniata</taxon>
        <taxon>Vertebrata</taxon>
        <taxon>Euteleostomi</taxon>
        <taxon>Mammalia</taxon>
        <taxon>Eutheria</taxon>
        <taxon>Euarchontoglires</taxon>
        <taxon>Primates</taxon>
        <taxon>Haplorrhini</taxon>
        <taxon>Catarrhini</taxon>
        <taxon>Hominidae</taxon>
        <taxon>Homo</taxon>
    </lineage>
</organism>
<feature type="signal peptide" evidence="4">
    <location>
        <begin position="1"/>
        <end position="19"/>
    </location>
</feature>
<feature type="chain" id="PRO_0000042583" description="17-beta-hydroxysteroid dehydrogenase 13">
    <location>
        <begin position="20"/>
        <end position="300"/>
    </location>
</feature>
<feature type="active site" description="Proton acceptor" evidence="1">
    <location>
        <position position="185"/>
    </location>
</feature>
<feature type="binding site" evidence="1">
    <location>
        <begin position="40"/>
        <end position="67"/>
    </location>
    <ligand>
        <name>NAD(+)</name>
        <dbReference type="ChEBI" id="CHEBI:57540"/>
    </ligand>
</feature>
<feature type="binding site" evidence="1">
    <location>
        <position position="172"/>
    </location>
    <ligand>
        <name>substrate</name>
    </ligand>
</feature>
<feature type="binding site" evidence="1">
    <location>
        <position position="189"/>
    </location>
    <ligand>
        <name>NAD(+)</name>
        <dbReference type="ChEBI" id="CHEBI:57540"/>
    </ligand>
</feature>
<feature type="modified residue" description="Phosphoserine" evidence="2">
    <location>
        <position position="33"/>
    </location>
</feature>
<feature type="splice variant" id="VSP_015860" description="In isoform 1." evidence="11 15">
    <location>
        <begin position="71"/>
        <end position="106"/>
    </location>
</feature>
<feature type="sequence variant" id="VAR_087865" description="Loss of retinol/retinal dehydrogenase activity; does not affect localization to lipid droplets; dbSNP:rs62305723." evidence="7 10">
    <original>P</original>
    <variation>S</variation>
    <location>
        <position position="260"/>
    </location>
</feature>
<feature type="mutagenesis site" description="Does not localize to lipid droplets." evidence="7">
    <location>
        <begin position="22"/>
        <end position="28"/>
    </location>
</feature>
<feature type="mutagenesis site" description="Loss of retinol/retinal dehydrogenase activity." evidence="7">
    <original>GIG</original>
    <variation>AIA</variation>
    <location>
        <begin position="47"/>
        <end position="49"/>
    </location>
</feature>
<feature type="mutagenesis site" description="Does not localize to lipid droplets." evidence="8">
    <location>
        <begin position="69"/>
        <end position="84"/>
    </location>
</feature>
<feature type="mutagenesis site" description="Does not localize to lipid droplets." evidence="8">
    <location>
        <begin position="85"/>
        <end position="93"/>
    </location>
</feature>
<feature type="mutagenesis site" description="Does not localize to lipid droplets." evidence="8">
    <location>
        <begin position="94"/>
        <end position="106"/>
    </location>
</feature>
<feature type="mutagenesis site" description="Decreased retinol/retinal dehydrogenase activity; when associated with A-101." evidence="8">
    <original>R</original>
    <variation>A</variation>
    <location>
        <position position="97"/>
    </location>
</feature>
<feature type="mutagenesis site" description="Decreased retinol/retinal dehydrogenase activity; when associated with A-97." evidence="8">
    <original>Y</original>
    <variation>A</variation>
    <location>
        <position position="101"/>
    </location>
</feature>
<feature type="mutagenesis site" description="Loss of retinol/retinal dehydrogenase activity." evidence="8">
    <original>N</original>
    <variation>A</variation>
    <location>
        <position position="144"/>
    </location>
</feature>
<feature type="mutagenesis site" description="Loss of retinol/retinal dehydrogenase activity; when associated with A-156." evidence="8">
    <original>K</original>
    <variation>A</variation>
    <location>
        <position position="153"/>
    </location>
</feature>
<feature type="mutagenesis site" description="Loss of retinol/retinal dehydrogenase activity; when associated with A-153." evidence="8">
    <original>L</original>
    <variation>A</variation>
    <location>
        <position position="156"/>
    </location>
</feature>
<feature type="mutagenesis site" description="Loss of retinol/retinal dehydrogenase activity." evidence="8">
    <original>S</original>
    <variation>A</variation>
    <location>
        <position position="172"/>
    </location>
</feature>
<feature type="mutagenesis site" description="Loss of retinol/retinal dehydrogenase activity; when associated with A-189." evidence="8">
    <original>Y</original>
    <variation>A</variation>
    <location>
        <position position="185"/>
    </location>
</feature>
<feature type="mutagenesis site" description="Loss of retinol/retinal dehydrogenase activity; when associated with A-185." evidence="8">
    <original>K</original>
    <variation>A</variation>
    <location>
        <position position="189"/>
    </location>
</feature>
<feature type="mutagenesis site" description="Loss of retinol/retinal dehydrogenase activity; when associated with A-202." evidence="8">
    <original>L</original>
    <variation>A</variation>
    <location>
        <position position="199"/>
    </location>
</feature>
<feature type="mutagenesis site" description="Loss of retinol/retinal dehydrogenase activity; when associated with A-199." evidence="8">
    <original>E</original>
    <variation>A</variation>
    <location>
        <position position="202"/>
    </location>
</feature>
<feature type="mutagenesis site" description="Decreased retinol/retinal dehydrogenase activity." evidence="8">
    <original>K</original>
    <variation>A</variation>
    <location>
        <position position="208"/>
    </location>
</feature>
<feature type="helix" evidence="19">
    <location>
        <begin position="3"/>
        <end position="18"/>
    </location>
</feature>
<feature type="helix" evidence="19">
    <location>
        <begin position="23"/>
        <end position="26"/>
    </location>
</feature>
<feature type="strand" evidence="19">
    <location>
        <begin position="38"/>
        <end position="42"/>
    </location>
</feature>
<feature type="turn" evidence="19">
    <location>
        <begin position="43"/>
        <end position="45"/>
    </location>
</feature>
<feature type="helix" evidence="19">
    <location>
        <begin position="47"/>
        <end position="58"/>
    </location>
</feature>
<feature type="strand" evidence="19">
    <location>
        <begin position="62"/>
        <end position="68"/>
    </location>
</feature>
<feature type="helix" evidence="19">
    <location>
        <begin position="70"/>
        <end position="82"/>
    </location>
</feature>
<feature type="strand" evidence="19">
    <location>
        <begin position="88"/>
        <end position="91"/>
    </location>
</feature>
<feature type="helix" evidence="19">
    <location>
        <begin position="97"/>
        <end position="110"/>
    </location>
</feature>
<feature type="strand" evidence="19">
    <location>
        <begin position="115"/>
        <end position="119"/>
    </location>
</feature>
<feature type="helix" evidence="19">
    <location>
        <begin position="129"/>
        <end position="131"/>
    </location>
</feature>
<feature type="helix" evidence="19">
    <location>
        <begin position="134"/>
        <end position="144"/>
    </location>
</feature>
<feature type="helix" evidence="19">
    <location>
        <begin position="146"/>
        <end position="162"/>
    </location>
</feature>
<feature type="strand" evidence="19">
    <location>
        <begin position="165"/>
        <end position="170"/>
    </location>
</feature>
<feature type="helix" evidence="19">
    <location>
        <begin position="173"/>
        <end position="175"/>
    </location>
</feature>
<feature type="helix" evidence="19">
    <location>
        <begin position="183"/>
        <end position="205"/>
    </location>
</feature>
<feature type="strand" evidence="19">
    <location>
        <begin position="211"/>
        <end position="218"/>
    </location>
</feature>
<feature type="strand" evidence="19">
    <location>
        <begin position="221"/>
        <end position="226"/>
    </location>
</feature>
<feature type="helix" evidence="19">
    <location>
        <begin position="239"/>
        <end position="251"/>
    </location>
</feature>
<feature type="strand" evidence="19">
    <location>
        <begin position="255"/>
        <end position="260"/>
    </location>
</feature>
<feature type="helix" evidence="19">
    <location>
        <begin position="263"/>
        <end position="268"/>
    </location>
</feature>
<feature type="helix" evidence="19">
    <location>
        <begin position="270"/>
        <end position="272"/>
    </location>
</feature>
<feature type="helix" evidence="19">
    <location>
        <begin position="275"/>
        <end position="289"/>
    </location>
</feature>
<sequence>MNIILEILLLLITIIYSYLESLVKFFIPQRRKSVAGEIVLITGAGHGIGRQTTYEFAKRQSILVLWDINKRGVEETAAECRKLGVTAHAYVVDCSNREEIYRSLNQVKKEVGDVTIVVNNAGTVYPADLLSTKDEEITKTFEVNILGHFWITKALLPSMMERNHGHIVTVASVCGHEGIPYLIPYCSSKFAAVGFHRGLTSELQALGKTGIKTSCLCPVFVNTGFTKNPSTRLWPVLETDEVVRSLIDGILTNKKMIFVPSYINIFLRLQKFLPERASAILNRMQNIQFEAVVGHKIKMK</sequence>
<keyword id="KW-0002">3D-structure</keyword>
<keyword id="KW-0025">Alternative splicing</keyword>
<keyword id="KW-0963">Cytoplasm</keyword>
<keyword id="KW-0256">Endoplasmic reticulum</keyword>
<keyword id="KW-0551">Lipid droplet</keyword>
<keyword id="KW-0443">Lipid metabolism</keyword>
<keyword id="KW-0520">NAD</keyword>
<keyword id="KW-0560">Oxidoreductase</keyword>
<keyword id="KW-0597">Phosphoprotein</keyword>
<keyword id="KW-1267">Proteomics identification</keyword>
<keyword id="KW-1185">Reference proteome</keyword>
<keyword id="KW-0732">Signal</keyword>
<comment type="function">
    <text evidence="6 7 8">Plays a pivotal role in hepatic lipid metabolism (PubMed:29562163). In vitro, it catalyzes the oxidation of a variety of lipid substrates, including 17beta-estradiol, retinol, retinal, and leukotriene B4 (PubMed:29562163, PubMed:30415504, PubMed:32973038).</text>
</comment>
<comment type="function">
    <molecule>Isoform 2</molecule>
    <text evidence="7 8">Has retinol/retinal dehydrogenase activity in vitro.</text>
</comment>
<comment type="function">
    <molecule>Isoform 1</molecule>
    <text evidence="7">Does not have retinol/retinal dehydrogenase activity in vitro.</text>
</comment>
<comment type="catalytic activity">
    <reaction evidence="6">
        <text>17beta-estradiol + NAD(+) = estrone + NADH + H(+)</text>
        <dbReference type="Rhea" id="RHEA:24612"/>
        <dbReference type="ChEBI" id="CHEBI:15378"/>
        <dbReference type="ChEBI" id="CHEBI:16469"/>
        <dbReference type="ChEBI" id="CHEBI:17263"/>
        <dbReference type="ChEBI" id="CHEBI:57540"/>
        <dbReference type="ChEBI" id="CHEBI:57945"/>
        <dbReference type="EC" id="1.1.1.62"/>
    </reaction>
</comment>
<comment type="catalytic activity">
    <molecule>Isoform 2</molecule>
    <reaction evidence="7 8">
        <text>all-trans-retinol + NAD(+) = all-trans-retinal + NADH + H(+)</text>
        <dbReference type="Rhea" id="RHEA:21284"/>
        <dbReference type="ChEBI" id="CHEBI:15378"/>
        <dbReference type="ChEBI" id="CHEBI:17336"/>
        <dbReference type="ChEBI" id="CHEBI:17898"/>
        <dbReference type="ChEBI" id="CHEBI:57540"/>
        <dbReference type="ChEBI" id="CHEBI:57945"/>
        <dbReference type="EC" id="1.1.1.105"/>
    </reaction>
</comment>
<comment type="catalytic activity">
    <molecule>Isoform 2</molecule>
    <reaction evidence="7 8">
        <text>all-trans-retinal + NAD(+) + H2O = all-trans-retinoate + NADH + 2 H(+)</text>
        <dbReference type="Rhea" id="RHEA:42080"/>
        <dbReference type="ChEBI" id="CHEBI:15377"/>
        <dbReference type="ChEBI" id="CHEBI:15378"/>
        <dbReference type="ChEBI" id="CHEBI:17898"/>
        <dbReference type="ChEBI" id="CHEBI:35291"/>
        <dbReference type="ChEBI" id="CHEBI:57540"/>
        <dbReference type="ChEBI" id="CHEBI:57945"/>
    </reaction>
</comment>
<comment type="biophysicochemical properties">
    <kinetics>
        <KM evidence="6">6.08 uM for 17beta-estradiol</KM>
        <Vmax evidence="6">0.94 nmol/min/mg enzyme with 17beta-estradiol as substrate</Vmax>
    </kinetics>
</comment>
<comment type="interaction">
    <interactant intactId="EBI-18053395">
        <id>Q7Z5P4</id>
    </interactant>
    <interactant intactId="EBI-348517">
        <id>O95870</id>
        <label>ABHD16A</label>
    </interactant>
    <organismsDiffer>false</organismsDiffer>
    <experiments>3</experiments>
</comment>
<comment type="interaction">
    <interactant intactId="EBI-18053395">
        <id>Q7Z5P4</id>
    </interactant>
    <interactant intactId="EBI-11277970">
        <id>Q9UHX3</id>
        <label>ADGRE2</label>
    </interactant>
    <organismsDiffer>false</organismsDiffer>
    <experiments>3</experiments>
</comment>
<comment type="interaction">
    <interactant intactId="EBI-18053395">
        <id>Q7Z5P4</id>
    </interactant>
    <interactant intactId="EBI-2803601">
        <id>Q9NRZ7</id>
        <label>AGPAT3</label>
    </interactant>
    <organismsDiffer>false</organismsDiffer>
    <experiments>3</experiments>
</comment>
<comment type="interaction">
    <interactant intactId="EBI-18053395">
        <id>Q7Z5P4</id>
    </interactant>
    <interactant intactId="EBI-1754287">
        <id>Q9NRZ5</id>
        <label>AGPAT4</label>
    </interactant>
    <organismsDiffer>false</organismsDiffer>
    <experiments>3</experiments>
</comment>
<comment type="interaction">
    <interactant intactId="EBI-18053395">
        <id>Q7Z5P4</id>
    </interactant>
    <interactant intactId="EBI-11522760">
        <id>Q6RW13-2</id>
        <label>AGTRAP</label>
    </interactant>
    <organismsDiffer>false</organismsDiffer>
    <experiments>3</experiments>
</comment>
<comment type="interaction">
    <interactant intactId="EBI-18053395">
        <id>Q7Z5P4</id>
    </interactant>
    <interactant intactId="EBI-11957045">
        <id>Q9NVV5-2</id>
        <label>AIG1</label>
    </interactant>
    <organismsDiffer>false</organismsDiffer>
    <experiments>3</experiments>
</comment>
<comment type="interaction">
    <interactant intactId="EBI-18053395">
        <id>Q7Z5P4</id>
    </interactant>
    <interactant intactId="EBI-12109402">
        <id>Q86W74-2</id>
        <label>ANKRD46</label>
    </interactant>
    <organismsDiffer>false</organismsDiffer>
    <experiments>3</experiments>
</comment>
<comment type="interaction">
    <interactant intactId="EBI-18053395">
        <id>Q7Z5P4</id>
    </interactant>
    <interactant intactId="EBI-3921628">
        <id>Q16853</id>
        <label>AOC3</label>
    </interactant>
    <organismsDiffer>false</organismsDiffer>
    <experiments>3</experiments>
</comment>
<comment type="interaction">
    <interactant intactId="EBI-18053395">
        <id>Q7Z5P4</id>
    </interactant>
    <interactant intactId="EBI-1171525">
        <id>P02652</id>
        <label>APOA2</label>
    </interactant>
    <organismsDiffer>false</organismsDiffer>
    <experiments>3</experiments>
</comment>
<comment type="interaction">
    <interactant intactId="EBI-18053395">
        <id>Q7Z5P4</id>
    </interactant>
    <interactant intactId="EBI-714543">
        <id>Q15041</id>
        <label>ARL6IP1</label>
    </interactant>
    <organismsDiffer>false</organismsDiffer>
    <experiments>3</experiments>
</comment>
<comment type="interaction">
    <interactant intactId="EBI-18053395">
        <id>Q7Z5P4</id>
    </interactant>
    <interactant intactId="EBI-721179">
        <id>P27449</id>
        <label>ATP6V0C</label>
    </interactant>
    <organismsDiffer>false</organismsDiffer>
    <experiments>3</experiments>
</comment>
<comment type="interaction">
    <interactant intactId="EBI-18053395">
        <id>Q7Z5P4</id>
    </interactant>
    <interactant intactId="EBI-17289784">
        <id>Q96PG8</id>
        <label>BBC3</label>
    </interactant>
    <organismsDiffer>false</organismsDiffer>
    <experiments>3</experiments>
</comment>
<comment type="interaction">
    <interactant intactId="EBI-18053395">
        <id>Q7Z5P4</id>
    </interactant>
    <interactant intactId="EBI-12244618">
        <id>Q6PL45-2</id>
        <label>BRICD5</label>
    </interactant>
    <organismsDiffer>false</organismsDiffer>
    <experiments>3</experiments>
</comment>
<comment type="interaction">
    <interactant intactId="EBI-18053395">
        <id>Q7Z5P4</id>
    </interactant>
    <interactant intactId="EBI-9686780">
        <id>Q06432</id>
        <label>CACNG1</label>
    </interactant>
    <organismsDiffer>false</organismsDiffer>
    <experiments>3</experiments>
</comment>
<comment type="interaction">
    <interactant intactId="EBI-18053395">
        <id>Q7Z5P4</id>
    </interactant>
    <interactant intactId="EBI-19051471">
        <id>Q5R3K3</id>
        <label>CALHM6</label>
    </interactant>
    <organismsDiffer>false</organismsDiffer>
    <experiments>3</experiments>
</comment>
<comment type="interaction">
    <interactant intactId="EBI-18053395">
        <id>Q7Z5P4</id>
    </interactant>
    <interactant intactId="EBI-9083477">
        <id>Q9P0B6</id>
        <label>CCDC167</label>
    </interactant>
    <organismsDiffer>false</organismsDiffer>
    <experiments>3</experiments>
</comment>
<comment type="interaction">
    <interactant intactId="EBI-18053395">
        <id>Q7Z5P4</id>
    </interactant>
    <interactant intactId="EBI-358858">
        <id>O14735</id>
        <label>CDIPT</label>
    </interactant>
    <organismsDiffer>false</organismsDiffer>
    <experiments>3</experiments>
</comment>
<comment type="interaction">
    <interactant intactId="EBI-18053395">
        <id>Q7Z5P4</id>
    </interactant>
    <interactant intactId="EBI-13372810">
        <id>P78369</id>
        <label>CLDN10</label>
    </interactant>
    <organismsDiffer>false</organismsDiffer>
    <experiments>3</experiments>
</comment>
<comment type="interaction">
    <interactant intactId="EBI-18053395">
        <id>Q7Z5P4</id>
    </interactant>
    <interactant intactId="EBI-12256978">
        <id>Q8N6F1-2</id>
        <label>CLDN19</label>
    </interactant>
    <organismsDiffer>false</organismsDiffer>
    <experiments>3</experiments>
</comment>
<comment type="interaction">
    <interactant intactId="EBI-18053395">
        <id>Q7Z5P4</id>
    </interactant>
    <interactant intactId="EBI-9316372">
        <id>O14493</id>
        <label>CLDN4</label>
    </interactant>
    <organismsDiffer>false</organismsDiffer>
    <experiments>3</experiments>
</comment>
<comment type="interaction">
    <interactant intactId="EBI-18053395">
        <id>Q7Z5P4</id>
    </interactant>
    <interactant intactId="EBI-11959453">
        <id>Q8NHS1</id>
        <label>CLDND2</label>
    </interactant>
    <organismsDiffer>false</organismsDiffer>
    <experiments>3</experiments>
</comment>
<comment type="interaction">
    <interactant intactId="EBI-18053395">
        <id>Q7Z5P4</id>
    </interactant>
    <interactant intactId="EBI-11522780">
        <id>Q96DZ9-2</id>
        <label>CMTM5</label>
    </interactant>
    <organismsDiffer>false</organismsDiffer>
    <experiments>3</experiments>
</comment>
<comment type="interaction">
    <interactant intactId="EBI-18053395">
        <id>Q7Z5P4</id>
    </interactant>
    <interactant intactId="EBI-2807956">
        <id>Q96FZ5</id>
        <label>CMTM7</label>
    </interactant>
    <organismsDiffer>false</organismsDiffer>
    <experiments>3</experiments>
</comment>
<comment type="interaction">
    <interactant intactId="EBI-18053395">
        <id>Q7Z5P4</id>
    </interactant>
    <interactant intactId="EBI-1046040">
        <id>P00387</id>
        <label>CYB5R3</label>
    </interactant>
    <organismsDiffer>false</organismsDiffer>
    <experiments>3</experiments>
</comment>
<comment type="interaction">
    <interactant intactId="EBI-18053395">
        <id>Q7Z5P4</id>
    </interactant>
    <interactant intactId="EBI-2680384">
        <id>Q9BQA9</id>
        <label>CYBC1</label>
    </interactant>
    <organismsDiffer>false</organismsDiffer>
    <experiments>3</experiments>
</comment>
<comment type="interaction">
    <interactant intactId="EBI-18053395">
        <id>Q7Z5P4</id>
    </interactant>
    <interactant intactId="EBI-1752413">
        <id>P78329</id>
        <label>CYP4F2</label>
    </interactant>
    <organismsDiffer>false</organismsDiffer>
    <experiments>3</experiments>
</comment>
<comment type="interaction">
    <interactant intactId="EBI-18053395">
        <id>Q7Z5P4</id>
    </interactant>
    <interactant intactId="EBI-517508">
        <id>Q9NR28</id>
        <label>DIABLO</label>
    </interactant>
    <organismsDiffer>false</organismsDiffer>
    <experiments>3</experiments>
</comment>
<comment type="interaction">
    <interactant intactId="EBI-18053395">
        <id>Q7Z5P4</id>
    </interactant>
    <interactant intactId="EBI-3915253">
        <id>Q15125</id>
        <label>EBP</label>
    </interactant>
    <organismsDiffer>false</organismsDiffer>
    <experiments>3</experiments>
</comment>
<comment type="interaction">
    <interactant intactId="EBI-18053395">
        <id>Q7Z5P4</id>
    </interactant>
    <interactant intactId="EBI-521451">
        <id>Q5VYK3</id>
        <label>ECPAS</label>
    </interactant>
    <organismsDiffer>false</organismsDiffer>
    <experiments>3</experiments>
</comment>
<comment type="interaction">
    <interactant intactId="EBI-18053395">
        <id>Q7Z5P4</id>
    </interactant>
    <interactant intactId="EBI-743099">
        <id>Q969F0</id>
        <label>FATE1</label>
    </interactant>
    <organismsDiffer>false</organismsDiffer>
    <experiments>3</experiments>
</comment>
<comment type="interaction">
    <interactant intactId="EBI-18053395">
        <id>Q7Z5P4</id>
    </interactant>
    <interactant intactId="EBI-12142299">
        <id>Q96IV6</id>
        <label>FAXDC2</label>
    </interactant>
    <organismsDiffer>false</organismsDiffer>
    <experiments>3</experiments>
</comment>
<comment type="interaction">
    <interactant intactId="EBI-18053395">
        <id>Q7Z5P4</id>
    </interactant>
    <interactant intactId="EBI-13049494">
        <id>Q9UGM5</id>
        <label>FETUB</label>
    </interactant>
    <organismsDiffer>false</organismsDiffer>
    <experiments>3</experiments>
</comment>
<comment type="interaction">
    <interactant intactId="EBI-18053395">
        <id>Q7Z5P4</id>
    </interactant>
    <interactant intactId="EBI-3905204">
        <id>P29033</id>
        <label>GJB2</label>
    </interactant>
    <organismsDiffer>false</organismsDiffer>
    <experiments>3</experiments>
</comment>
<comment type="interaction">
    <interactant intactId="EBI-18053395">
        <id>Q7Z5P4</id>
    </interactant>
    <interactant intactId="EBI-712073">
        <id>Q8NBJ4</id>
        <label>GOLM1</label>
    </interactant>
    <organismsDiffer>false</organismsDiffer>
    <experiments>3</experiments>
</comment>
<comment type="interaction">
    <interactant intactId="EBI-18053395">
        <id>Q7Z5P4</id>
    </interactant>
    <interactant intactId="EBI-4401517">
        <id>O14653</id>
        <label>GOSR2</label>
    </interactant>
    <organismsDiffer>false</organismsDiffer>
    <experiments>3</experiments>
</comment>
<comment type="interaction">
    <interactant intactId="EBI-18053395">
        <id>Q7Z5P4</id>
    </interactant>
    <interactant intactId="EBI-10194756">
        <id>P06028</id>
        <label>GYPB</label>
    </interactant>
    <organismsDiffer>false</organismsDiffer>
    <experiments>3</experiments>
</comment>
<comment type="interaction">
    <interactant intactId="EBI-18053395">
        <id>Q7Z5P4</id>
    </interactant>
    <interactant intactId="EBI-3918847">
        <id>Q9H2F3</id>
        <label>HSD3B7</label>
    </interactant>
    <organismsDiffer>false</organismsDiffer>
    <experiments>3</experiments>
</comment>
<comment type="interaction">
    <interactant intactId="EBI-18053395">
        <id>Q7Z5P4</id>
    </interactant>
    <interactant intactId="EBI-720480">
        <id>P24593</id>
        <label>IGFBP5</label>
    </interactant>
    <organismsDiffer>false</organismsDiffer>
    <experiments>3</experiments>
</comment>
<comment type="interaction">
    <interactant intactId="EBI-18053395">
        <id>Q7Z5P4</id>
    </interactant>
    <interactant intactId="EBI-8503746">
        <id>Q9Y5U4</id>
        <label>INSIG2</label>
    </interactant>
    <organismsDiffer>false</organismsDiffer>
    <experiments>3</experiments>
</comment>
<comment type="interaction">
    <interactant intactId="EBI-18053395">
        <id>Q7Z5P4</id>
    </interactant>
    <interactant intactId="EBI-2568251">
        <id>P11215</id>
        <label>ITGAM</label>
    </interactant>
    <organismsDiffer>false</organismsDiffer>
    <experiments>3</experiments>
</comment>
<comment type="interaction">
    <interactant intactId="EBI-18053395">
        <id>Q7Z5P4</id>
    </interactant>
    <interactant intactId="EBI-10266796">
        <id>Q8N5M9</id>
        <label>JAGN1</label>
    </interactant>
    <organismsDiffer>false</organismsDiffer>
    <experiments>3</experiments>
</comment>
<comment type="interaction">
    <interactant intactId="EBI-18053395">
        <id>Q7Z5P4</id>
    </interactant>
    <interactant intactId="EBI-4280011">
        <id>Q7L5N7</id>
        <label>LPCAT2</label>
    </interactant>
    <organismsDiffer>false</organismsDiffer>
    <experiments>3</experiments>
</comment>
<comment type="interaction">
    <interactant intactId="EBI-18053395">
        <id>Q7Z5P4</id>
    </interactant>
    <interactant intactId="EBI-13291307">
        <id>O95237</id>
        <label>LRAT</label>
    </interactant>
    <organismsDiffer>false</organismsDiffer>
    <experiments>3</experiments>
</comment>
<comment type="interaction">
    <interactant intactId="EBI-18053395">
        <id>Q7Z5P4</id>
    </interactant>
    <interactant intactId="EBI-2341610">
        <id>Q9NX47</id>
        <label>MARCHF5</label>
    </interactant>
    <organismsDiffer>false</organismsDiffer>
    <experiments>3</experiments>
</comment>
<comment type="interaction">
    <interactant intactId="EBI-18053395">
        <id>Q7Z5P4</id>
    </interactant>
    <interactant intactId="EBI-3920969">
        <id>Q6N075</id>
        <label>MFSD5</label>
    </interactant>
    <organismsDiffer>false</organismsDiffer>
    <experiments>3</experiments>
</comment>
<comment type="interaction">
    <interactant intactId="EBI-18053395">
        <id>Q7Z5P4</id>
    </interactant>
    <interactant intactId="EBI-12866138">
        <id>A0A0C4DFN3</id>
        <label>MGLL</label>
    </interactant>
    <organismsDiffer>false</organismsDiffer>
    <experiments>3</experiments>
</comment>
<comment type="interaction">
    <interactant intactId="EBI-18053395">
        <id>Q7Z5P4</id>
    </interactant>
    <interactant intactId="EBI-11988931">
        <id>Q96C03-3</id>
        <label>MIEF2</label>
    </interactant>
    <organismsDiffer>false</organismsDiffer>
    <experiments>3</experiments>
</comment>
<comment type="interaction">
    <interactant intactId="EBI-18053395">
        <id>Q7Z5P4</id>
    </interactant>
    <interactant intactId="EBI-992788">
        <id>P50281</id>
        <label>MMP14</label>
    </interactant>
    <organismsDiffer>false</organismsDiffer>
    <experiments>3</experiments>
</comment>
<comment type="interaction">
    <interactant intactId="EBI-18053395">
        <id>Q7Z5P4</id>
    </interactant>
    <interactant intactId="EBI-12179105">
        <id>O75425</id>
        <label>MOSPD3</label>
    </interactant>
    <organismsDiffer>false</organismsDiffer>
    <experiments>3</experiments>
</comment>
<comment type="interaction">
    <interactant intactId="EBI-18053395">
        <id>Q7Z5P4</id>
    </interactant>
    <interactant intactId="EBI-2808234">
        <id>P11836</id>
        <label>MS4A1</label>
    </interactant>
    <organismsDiffer>false</organismsDiffer>
    <experiments>3</experiments>
</comment>
<comment type="interaction">
    <interactant intactId="EBI-18053395">
        <id>Q7Z5P4</id>
    </interactant>
    <interactant intactId="EBI-3921185">
        <id>Q9H115</id>
        <label>NAPB</label>
    </interactant>
    <organismsDiffer>false</organismsDiffer>
    <experiments>3</experiments>
</comment>
<comment type="interaction">
    <interactant intactId="EBI-18053395">
        <id>Q7Z5P4</id>
    </interactant>
    <interactant intactId="EBI-2863634">
        <id>Q9UHE5</id>
        <label>NAT8</label>
    </interactant>
    <organismsDiffer>false</organismsDiffer>
    <experiments>3</experiments>
</comment>
<comment type="interaction">
    <interactant intactId="EBI-18053395">
        <id>Q7Z5P4</id>
    </interactant>
    <interactant intactId="EBI-10262547">
        <id>Q8IXM6</id>
        <label>NRM</label>
    </interactant>
    <organismsDiffer>false</organismsDiffer>
    <experiments>3</experiments>
</comment>
<comment type="interaction">
    <interactant intactId="EBI-18053395">
        <id>Q7Z5P4</id>
    </interactant>
    <interactant intactId="EBI-721750">
        <id>Q8N138</id>
        <label>ORMDL3</label>
    </interactant>
    <organismsDiffer>false</organismsDiffer>
    <experiments>3</experiments>
</comment>
<comment type="interaction">
    <interactant intactId="EBI-18053395">
        <id>Q7Z5P4</id>
    </interactant>
    <interactant intactId="EBI-741171">
        <id>Q96AL5</id>
        <label>PBX3</label>
    </interactant>
    <organismsDiffer>false</organismsDiffer>
    <experiments>3</experiments>
</comment>
<comment type="interaction">
    <interactant intactId="EBI-18053395">
        <id>Q7Z5P4</id>
    </interactant>
    <interactant intactId="EBI-725795">
        <id>O60664</id>
        <label>PLIN3</label>
    </interactant>
    <organismsDiffer>false</organismsDiffer>
    <experiments>3</experiments>
</comment>
<comment type="interaction">
    <interactant intactId="EBI-18053395">
        <id>Q7Z5P4</id>
    </interactant>
    <interactant intactId="EBI-692836">
        <id>P26678</id>
        <label>PLN</label>
    </interactant>
    <organismsDiffer>false</organismsDiffer>
    <experiments>3</experiments>
</comment>
<comment type="interaction">
    <interactant intactId="EBI-18053395">
        <id>Q7Z5P4</id>
    </interactant>
    <interactant intactId="EBI-608347">
        <id>Q04941</id>
        <label>PLP2</label>
    </interactant>
    <organismsDiffer>false</organismsDiffer>
    <experiments>3</experiments>
</comment>
<comment type="interaction">
    <interactant intactId="EBI-18053395">
        <id>Q7Z5P4</id>
    </interactant>
    <interactant intactId="EBI-8652812">
        <id>P54315</id>
        <label>PNLIPRP1</label>
    </interactant>
    <organismsDiffer>false</organismsDiffer>
    <experiments>3</experiments>
</comment>
<comment type="interaction">
    <interactant intactId="EBI-18053395">
        <id>Q7Z5P4</id>
    </interactant>
    <interactant intactId="EBI-742898">
        <id>P43378</id>
        <label>PTPN9</label>
    </interactant>
    <organismsDiffer>false</organismsDiffer>
    <experiments>3</experiments>
</comment>
<comment type="interaction">
    <interactant intactId="EBI-18053395">
        <id>Q7Z5P4</id>
    </interactant>
    <interactant intactId="EBI-712367">
        <id>Q9UI14</id>
        <label>RABAC1</label>
    </interactant>
    <organismsDiffer>false</organismsDiffer>
    <experiments>3</experiments>
</comment>
<comment type="interaction">
    <interactant intactId="EBI-18053395">
        <id>Q7Z5P4</id>
    </interactant>
    <interactant intactId="EBI-14065960">
        <id>Q96HR9-2</id>
        <label>REEP6</label>
    </interactant>
    <organismsDiffer>false</organismsDiffer>
    <experiments>3</experiments>
</comment>
<comment type="interaction">
    <interactant intactId="EBI-18053395">
        <id>Q7Z5P4</id>
    </interactant>
    <interactant intactId="EBI-1052363">
        <id>Q9NS64</id>
        <label>RPRM</label>
    </interactant>
    <organismsDiffer>false</organismsDiffer>
    <experiments>3</experiments>
</comment>
<comment type="interaction">
    <interactant intactId="EBI-18053395">
        <id>Q7Z5P4</id>
    </interactant>
    <interactant intactId="EBI-8636004">
        <id>Q96GQ5</id>
        <label>RUSF1</label>
    </interactant>
    <organismsDiffer>false</organismsDiffer>
    <experiments>3</experiments>
</comment>
<comment type="interaction">
    <interactant intactId="EBI-18053395">
        <id>Q7Z5P4</id>
    </interactant>
    <interactant intactId="EBI-3917235">
        <id>Q9NTJ5</id>
        <label>SACM1L</label>
    </interactant>
    <organismsDiffer>false</organismsDiffer>
    <experiments>3</experiments>
</comment>
<comment type="interaction">
    <interactant intactId="EBI-18053395">
        <id>Q7Z5P4</id>
    </interactant>
    <interactant intactId="EBI-2695784">
        <id>Q8TAC9</id>
        <label>SCAMP5</label>
    </interactant>
    <organismsDiffer>false</organismsDiffer>
    <experiments>3</experiments>
</comment>
<comment type="interaction">
    <interactant intactId="EBI-18053395">
        <id>Q7Z5P4</id>
    </interactant>
    <interactant intactId="EBI-12056025">
        <id>Q14162</id>
        <label>SCARF1</label>
    </interactant>
    <organismsDiffer>false</organismsDiffer>
    <experiments>3</experiments>
</comment>
<comment type="interaction">
    <interactant intactId="EBI-18053395">
        <id>Q7Z5P4</id>
    </interactant>
    <interactant intactId="EBI-2684237">
        <id>O00767</id>
        <label>SCD</label>
    </interactant>
    <organismsDiffer>false</organismsDiffer>
    <experiments>3</experiments>
</comment>
<comment type="interaction">
    <interactant intactId="EBI-18053395">
        <id>Q7Z5P4</id>
    </interactant>
    <interactant intactId="EBI-1058865">
        <id>O75396</id>
        <label>SEC22B</label>
    </interactant>
    <organismsDiffer>false</organismsDiffer>
    <experiments>3</experiments>
</comment>
<comment type="interaction">
    <interactant intactId="EBI-18053395">
        <id>Q7Z5P4</id>
    </interactant>
    <interactant intactId="EBI-10329948">
        <id>Q9Y6X1</id>
        <label>SERP1</label>
    </interactant>
    <organismsDiffer>false</organismsDiffer>
    <experiments>3</experiments>
</comment>
<comment type="interaction">
    <interactant intactId="EBI-18053395">
        <id>Q7Z5P4</id>
    </interactant>
    <interactant intactId="EBI-4402330">
        <id>O95562</id>
        <label>SFT2D2</label>
    </interactant>
    <organismsDiffer>false</organismsDiffer>
    <experiments>3</experiments>
</comment>
<comment type="interaction">
    <interactant intactId="EBI-18053395">
        <id>Q7Z5P4</id>
    </interactant>
    <interactant intactId="EBI-355861">
        <id>Q9H9B4</id>
        <label>SFXN1</label>
    </interactant>
    <organismsDiffer>false</organismsDiffer>
    <experiments>3</experiments>
</comment>
<comment type="interaction">
    <interactant intactId="EBI-18053395">
        <id>Q7Z5P4</id>
    </interactant>
    <interactant intactId="EBI-6381136">
        <id>Q96NB2</id>
        <label>SFXN2</label>
    </interactant>
    <organismsDiffer>false</organismsDiffer>
    <experiments>3</experiments>
</comment>
<comment type="interaction">
    <interactant intactId="EBI-18053395">
        <id>Q7Z5P4</id>
    </interactant>
    <interactant intactId="EBI-1171999">
        <id>Q9BWM7</id>
        <label>SFXN3</label>
    </interactant>
    <organismsDiffer>false</organismsDiffer>
    <experiments>3</experiments>
</comment>
<comment type="interaction">
    <interactant intactId="EBI-18053395">
        <id>Q7Z5P4</id>
    </interactant>
    <interactant intactId="EBI-10281975">
        <id>Q96AG3</id>
        <label>SLC25A46</label>
    </interactant>
    <organismsDiffer>false</organismsDiffer>
    <experiments>3</experiments>
</comment>
<comment type="interaction">
    <interactant intactId="EBI-18053395">
        <id>Q7Z5P4</id>
    </interactant>
    <interactant intactId="EBI-10294651">
        <id>Q99726</id>
        <label>SLC30A3</label>
    </interactant>
    <organismsDiffer>false</organismsDiffer>
    <experiments>3</experiments>
</comment>
<comment type="interaction">
    <interactant intactId="EBI-18053395">
        <id>Q7Z5P4</id>
    </interactant>
    <interactant intactId="EBI-10281213">
        <id>Q969S0</id>
        <label>SLC35B4</label>
    </interactant>
    <organismsDiffer>false</organismsDiffer>
    <experiments>3</experiments>
</comment>
<comment type="interaction">
    <interactant intactId="EBI-18053395">
        <id>Q7Z5P4</id>
    </interactant>
    <interactant intactId="EBI-12867720">
        <id>Q6ICL7</id>
        <label>SLC35E4</label>
    </interactant>
    <organismsDiffer>false</organismsDiffer>
    <experiments>3</experiments>
</comment>
<comment type="interaction">
    <interactant intactId="EBI-18053395">
        <id>Q7Z5P4</id>
    </interactant>
    <interactant intactId="EBI-12188413">
        <id>B2RUZ4</id>
        <label>SMIM1</label>
    </interactant>
    <organismsDiffer>false</organismsDiffer>
    <experiments>3</experiments>
</comment>
<comment type="interaction">
    <interactant intactId="EBI-18053395">
        <id>Q7Z5P4</id>
    </interactant>
    <interactant intactId="EBI-11957067">
        <id>Q6UX34</id>
        <label>SNORC</label>
    </interactant>
    <organismsDiffer>false</organismsDiffer>
    <experiments>3</experiments>
</comment>
<comment type="interaction">
    <interactant intactId="EBI-18053395">
        <id>Q7Z5P4</id>
    </interactant>
    <interactant intactId="EBI-742688">
        <id>Q9NZD8</id>
        <label>SPG21</label>
    </interactant>
    <organismsDiffer>false</organismsDiffer>
    <experiments>3</experiments>
</comment>
<comment type="interaction">
    <interactant intactId="EBI-18053395">
        <id>Q7Z5P4</id>
    </interactant>
    <interactant intactId="EBI-12908338">
        <id>Q96JF0-2</id>
        <label>ST6GAL2</label>
    </interactant>
    <organismsDiffer>false</organismsDiffer>
    <experiments>3</experiments>
</comment>
<comment type="interaction">
    <interactant intactId="EBI-18053395">
        <id>Q7Z5P4</id>
    </interactant>
    <interactant intactId="EBI-12200293">
        <id>P0DN84</id>
        <label>STRIT1</label>
    </interactant>
    <organismsDiffer>false</organismsDiffer>
    <experiments>3</experiments>
</comment>
<comment type="interaction">
    <interactant intactId="EBI-18053395">
        <id>Q7Z5P4</id>
    </interactant>
    <interactant intactId="EBI-714206">
        <id>Q13190</id>
        <label>STX5</label>
    </interactant>
    <organismsDiffer>false</organismsDiffer>
    <experiments>3</experiments>
</comment>
<comment type="interaction">
    <interactant intactId="EBI-18053395">
        <id>Q7Z5P4</id>
    </interactant>
    <interactant intactId="EBI-3221827">
        <id>O15400</id>
        <label>STX7</label>
    </interactant>
    <organismsDiffer>false</organismsDiffer>
    <experiments>3</experiments>
</comment>
<comment type="interaction">
    <interactant intactId="EBI-18053395">
        <id>Q7Z5P4</id>
    </interactant>
    <interactant intactId="EBI-702328">
        <id>Q969Z0</id>
        <label>TBRG4</label>
    </interactant>
    <organismsDiffer>false</organismsDiffer>
    <experiments>3</experiments>
</comment>
<comment type="interaction">
    <interactant intactId="EBI-18053395">
        <id>Q7Z5P4</id>
    </interactant>
    <interactant intactId="EBI-714319">
        <id>P02787</id>
        <label>TF</label>
    </interactant>
    <organismsDiffer>false</organismsDiffer>
    <experiments>3</experiments>
</comment>
<comment type="interaction">
    <interactant intactId="EBI-18053395">
        <id>Q7Z5P4</id>
    </interactant>
    <interactant intactId="EBI-310962">
        <id>Q9UPZ6</id>
        <label>THSD7A</label>
    </interactant>
    <organismsDiffer>false</organismsDiffer>
    <experiments>3</experiments>
</comment>
<comment type="interaction">
    <interactant intactId="EBI-18053395">
        <id>Q7Z5P4</id>
    </interactant>
    <interactant intactId="EBI-1047996">
        <id>O14925</id>
        <label>TIMM23</label>
    </interactant>
    <organismsDiffer>false</organismsDiffer>
    <experiments>3</experiments>
</comment>
<comment type="interaction">
    <interactant intactId="EBI-18053395">
        <id>Q7Z5P4</id>
    </interactant>
    <interactant intactId="EBI-6268651">
        <id>Q9NPL8</id>
        <label>TIMMDC1</label>
    </interactant>
    <organismsDiffer>false</organismsDiffer>
    <experiments>3</experiments>
</comment>
<comment type="interaction">
    <interactant intactId="EBI-18053395">
        <id>Q7Z5P4</id>
    </interactant>
    <interactant intactId="EBI-8644968">
        <id>Q9NV29</id>
        <label>TMEM100</label>
    </interactant>
    <organismsDiffer>false</organismsDiffer>
    <experiments>3</experiments>
</comment>
<comment type="interaction">
    <interactant intactId="EBI-18053395">
        <id>Q7Z5P4</id>
    </interactant>
    <interactant intactId="EBI-727322">
        <id>Q9BXJ8</id>
        <label>TMEM120A</label>
    </interactant>
    <organismsDiffer>false</organismsDiffer>
    <experiments>3</experiments>
</comment>
<comment type="interaction">
    <interactant intactId="EBI-18053395">
        <id>Q7Z5P4</id>
    </interactant>
    <interactant intactId="EBI-2844246">
        <id>Q9NV12</id>
        <label>TMEM140</label>
    </interactant>
    <organismsDiffer>false</organismsDiffer>
    <experiments>3</experiments>
</comment>
<comment type="interaction">
    <interactant intactId="EBI-18053395">
        <id>Q7Z5P4</id>
    </interactant>
    <interactant intactId="EBI-2339195">
        <id>Q9P0S9</id>
        <label>TMEM14C</label>
    </interactant>
    <organismsDiffer>false</organismsDiffer>
    <experiments>3</experiments>
</comment>
<comment type="interaction">
    <interactant intactId="EBI-18053395">
        <id>Q7Z5P4</id>
    </interactant>
    <interactant intactId="EBI-17684533">
        <id>Q9NRX6</id>
        <label>TMEM167B</label>
    </interactant>
    <organismsDiffer>false</organismsDiffer>
    <experiments>3</experiments>
</comment>
<comment type="interaction">
    <interactant intactId="EBI-18053395">
        <id>Q7Z5P4</id>
    </interactant>
    <interactant intactId="EBI-741829">
        <id>Q96HH6</id>
        <label>TMEM19</label>
    </interactant>
    <organismsDiffer>false</organismsDiffer>
    <experiments>3</experiments>
</comment>
<comment type="interaction">
    <interactant intactId="EBI-18053395">
        <id>Q7Z5P4</id>
    </interactant>
    <interactant intactId="EBI-12274070">
        <id>Q969S6</id>
        <label>TMEM203</label>
    </interactant>
    <organismsDiffer>false</organismsDiffer>
    <experiments>3</experiments>
</comment>
<comment type="interaction">
    <interactant intactId="EBI-18053395">
        <id>Q7Z5P4</id>
    </interactant>
    <interactant intactId="EBI-347385">
        <id>Q9H0R3</id>
        <label>TMEM222</label>
    </interactant>
    <organismsDiffer>false</organismsDiffer>
    <experiments>3</experiments>
</comment>
<comment type="interaction">
    <interactant intactId="EBI-18053395">
        <id>Q7Z5P4</id>
    </interactant>
    <interactant intactId="EBI-12195227">
        <id>Q8NBD8</id>
        <label>TMEM229B</label>
    </interactant>
    <organismsDiffer>false</organismsDiffer>
    <experiments>3</experiments>
</comment>
<comment type="interaction">
    <interactant intactId="EBI-18053395">
        <id>Q7Z5P4</id>
    </interactant>
    <interactant intactId="EBI-12887458">
        <id>Q9BU79</id>
        <label>TMEM243</label>
    </interactant>
    <organismsDiffer>false</organismsDiffer>
    <experiments>3</experiments>
</comment>
<comment type="interaction">
    <interactant intactId="EBI-18053395">
        <id>Q7Z5P4</id>
    </interactant>
    <interactant intactId="EBI-2870087">
        <id>Q8WV15</id>
        <label>TMEM255B</label>
    </interactant>
    <organismsDiffer>false</organismsDiffer>
    <experiments>3</experiments>
</comment>
<comment type="interaction">
    <interactant intactId="EBI-18053395">
        <id>Q7Z5P4</id>
    </interactant>
    <interactant intactId="EBI-12038591">
        <id>Q69YG0</id>
        <label>TMEM42</label>
    </interactant>
    <organismsDiffer>false</organismsDiffer>
    <experiments>3</experiments>
</comment>
<comment type="interaction">
    <interactant intactId="EBI-18053395">
        <id>Q7Z5P4</id>
    </interactant>
    <interactant intactId="EBI-2852148">
        <id>Q9H2L4</id>
        <label>TMEM60</label>
    </interactant>
    <organismsDiffer>false</organismsDiffer>
    <experiments>3</experiments>
</comment>
<comment type="interaction">
    <interactant intactId="EBI-18053395">
        <id>Q7Z5P4</id>
    </interactant>
    <interactant intactId="EBI-2548832">
        <id>Q8N661</id>
        <label>TMEM86B</label>
    </interactant>
    <organismsDiffer>false</organismsDiffer>
    <experiments>3</experiments>
</comment>
<comment type="interaction">
    <interactant intactId="EBI-18053395">
        <id>Q7Z5P4</id>
    </interactant>
    <interactant intactId="EBI-12111910">
        <id>Q5BJF2</id>
        <label>TMEM97</label>
    </interactant>
    <organismsDiffer>false</organismsDiffer>
    <experiments>3</experiments>
</comment>
<comment type="interaction">
    <interactant intactId="EBI-18053395">
        <id>Q7Z5P4</id>
    </interactant>
    <interactant intactId="EBI-6447886">
        <id>Q9Y320</id>
        <label>TMX2</label>
    </interactant>
    <organismsDiffer>false</organismsDiffer>
    <experiments>3</experiments>
</comment>
<comment type="interaction">
    <interactant intactId="EBI-18053395">
        <id>Q7Z5P4</id>
    </interactant>
    <interactant intactId="EBI-17249488">
        <id>Q6ZUI0</id>
        <label>TPRG1</label>
    </interactant>
    <organismsDiffer>false</organismsDiffer>
    <experiments>3</experiments>
</comment>
<comment type="interaction">
    <interactant intactId="EBI-18053395">
        <id>Q7Z5P4</id>
    </interactant>
    <interactant intactId="EBI-16746122">
        <id>Q9NSU2-1</id>
        <label>TREX1</label>
    </interactant>
    <organismsDiffer>false</organismsDiffer>
    <experiments>3</experiments>
</comment>
<comment type="interaction">
    <interactant intactId="EBI-18053395">
        <id>Q7Z5P4</id>
    </interactant>
    <interactant intactId="EBI-7902865">
        <id>Q9H1Z9</id>
        <label>TSPAN10</label>
    </interactant>
    <organismsDiffer>false</organismsDiffer>
    <experiments>2</experiments>
</comment>
<comment type="interaction">
    <interactant intactId="EBI-18053395">
        <id>Q7Z5P4</id>
    </interactant>
    <interactant intactId="EBI-10243654">
        <id>Q5BVD1</id>
        <label>TTMP</label>
    </interactant>
    <organismsDiffer>false</organismsDiffer>
    <experiments>3</experiments>
</comment>
<comment type="interaction">
    <interactant intactId="EBI-18053395">
        <id>Q7Z5P4</id>
    </interactant>
    <interactant intactId="EBI-1993850">
        <id>O00124</id>
        <label>UBXN8</label>
    </interactant>
    <organismsDiffer>false</organismsDiffer>
    <experiments>3</experiments>
</comment>
<comment type="interaction">
    <interactant intactId="EBI-18053395">
        <id>Q7Z5P4</id>
    </interactant>
    <interactant intactId="EBI-7601760">
        <id>Q53HI1</id>
        <label>UNC50</label>
    </interactant>
    <organismsDiffer>false</organismsDiffer>
    <experiments>3</experiments>
</comment>
<comment type="interaction">
    <interactant intactId="EBI-18053395">
        <id>Q7Z5P4</id>
    </interactant>
    <interactant intactId="EBI-520113">
        <id>P63027</id>
        <label>VAMP2</label>
    </interactant>
    <organismsDiffer>false</organismsDiffer>
    <experiments>3</experiments>
</comment>
<comment type="interaction">
    <interactant intactId="EBI-18053395">
        <id>Q7Z5P4</id>
    </interactant>
    <interactant intactId="EBI-1059156">
        <id>Q9P0L0</id>
        <label>VAPA</label>
    </interactant>
    <organismsDiffer>false</organismsDiffer>
    <experiments>3</experiments>
</comment>
<comment type="interaction">
    <interactant intactId="EBI-18053395">
        <id>Q7Z5P4</id>
    </interactant>
    <interactant intactId="EBI-1188298">
        <id>O95292</id>
        <label>VAPB</label>
    </interactant>
    <organismsDiffer>false</organismsDiffer>
    <experiments>3</experiments>
</comment>
<comment type="interaction">
    <interactant intactId="EBI-18053395">
        <id>Q7Z5P4</id>
    </interactant>
    <interactant intactId="EBI-751204">
        <id>Q9BWQ6</id>
        <label>YIPF2</label>
    </interactant>
    <organismsDiffer>false</organismsDiffer>
    <experiments>3</experiments>
</comment>
<comment type="interaction">
    <interactant intactId="EBI-18053395">
        <id>Q7Z5P4</id>
    </interactant>
    <interactant intactId="EBI-751253">
        <id>Q9BSR8</id>
        <label>YIPF4</label>
    </interactant>
    <organismsDiffer>false</organismsDiffer>
    <experiments>3</experiments>
</comment>
<comment type="subcellular location">
    <molecule>Isoform 2</molecule>
    <subcellularLocation>
        <location evidence="6 7 8">Lipid droplet</location>
    </subcellularLocation>
    <subcellularLocation>
        <location evidence="3">Endoplasmic reticulum</location>
    </subcellularLocation>
    <text evidence="3">Redistributed from the endoplasmic reticulum to lipids droplets in the cell upon induction of lipids droplet formation.</text>
</comment>
<comment type="subcellular location">
    <molecule>Isoform 1</molecule>
    <subcellularLocation>
        <location evidence="7">Cytoplasm</location>
    </subcellularLocation>
    <text evidence="7">Does not localize to lipid droplets.</text>
</comment>
<comment type="alternative products">
    <event type="alternative splicing"/>
    <isoform>
        <id>Q7Z5P4-1</id>
        <name>2</name>
        <name evidence="13 14">Isoform A</name>
        <sequence type="displayed"/>
    </isoform>
    <isoform>
        <id>Q7Z5P4-2</id>
        <name>1</name>
        <name evidence="13 14">Isoform B</name>
        <sequence type="described" ref="VSP_015860"/>
    </isoform>
</comment>
<comment type="tissue specificity">
    <text evidence="5 6">Highly expressed in the liver (PubMed:29562163). Also detected in ovary, bone marrow, kidney, brain, lung, skeletal muscle, bladder and testis.</text>
</comment>
<comment type="polymorphism">
    <text evidence="6 9">The insertion of an adenine adjacent to the donor splice site of exon 6 (dbSNP:rs72613567) is associated with reduced risk of non-alcoholic fatty liver disease and protection from chronic liver disease [MIM:620116]. It is also associated with reduced risk of hepatocellular carcinoma (PubMed:29562163, PubMed:34930143). Variant rs72613567 alters mRNA splicing and results in the synthesis of a truncated, unstable protein. Liver samples from variant carriers contain reduced levels of isoform 1 and isoform 2 transcripts (PubMed:29562163).</text>
</comment>
<comment type="similarity">
    <text evidence="16">Belongs to the short-chain dehydrogenases/reductases (SDR) family.</text>
</comment>
<accession>Q7Z5P4</accession>
<accession>A8K9R9</accession>
<accession>Q2M1L5</accession>
<accession>Q86W22</accession>
<accession>Q86W23</accession>
<name>DHB13_HUMAN</name>
<dbReference type="EC" id="1.1.1.-" evidence="6"/>
<dbReference type="EC" id="1.1.1.62" evidence="6"/>
<dbReference type="EC" id="1.1.1.105" evidence="7 8"/>
<dbReference type="EMBL" id="AY186249">
    <property type="protein sequence ID" value="AAO72313.1"/>
    <property type="molecule type" value="mRNA"/>
</dbReference>
<dbReference type="EMBL" id="AY186250">
    <property type="protein sequence ID" value="AAO72314.1"/>
    <property type="molecule type" value="mRNA"/>
</dbReference>
<dbReference type="EMBL" id="AY268355">
    <property type="protein sequence ID" value="AAP42289.1"/>
    <property type="molecule type" value="mRNA"/>
</dbReference>
<dbReference type="EMBL" id="AY358575">
    <property type="protein sequence ID" value="AAQ88938.1"/>
    <property type="molecule type" value="mRNA"/>
</dbReference>
<dbReference type="EMBL" id="AB073347">
    <property type="protein sequence ID" value="BAD38632.1"/>
    <property type="molecule type" value="mRNA"/>
</dbReference>
<dbReference type="EMBL" id="AK292784">
    <property type="protein sequence ID" value="BAF85473.1"/>
    <property type="molecule type" value="mRNA"/>
</dbReference>
<dbReference type="EMBL" id="CH471057">
    <property type="protein sequence ID" value="EAX05986.1"/>
    <property type="molecule type" value="Genomic_DNA"/>
</dbReference>
<dbReference type="EMBL" id="BC112303">
    <property type="protein sequence ID" value="AAI12304.1"/>
    <property type="molecule type" value="mRNA"/>
</dbReference>
<dbReference type="EMBL" id="BC112305">
    <property type="protein sequence ID" value="AAI12306.1"/>
    <property type="molecule type" value="mRNA"/>
</dbReference>
<dbReference type="CCDS" id="CCDS3618.1">
    <molecule id="Q7Z5P4-1"/>
</dbReference>
<dbReference type="CCDS" id="CCDS47097.1">
    <molecule id="Q7Z5P4-2"/>
</dbReference>
<dbReference type="RefSeq" id="NP_001129702.1">
    <molecule id="Q7Z5P4-2"/>
    <property type="nucleotide sequence ID" value="NM_001136230.3"/>
</dbReference>
<dbReference type="RefSeq" id="NP_835236.2">
    <molecule id="Q7Z5P4-1"/>
    <property type="nucleotide sequence ID" value="NM_178135.5"/>
</dbReference>
<dbReference type="PDB" id="8G9V">
    <property type="method" value="X-ray"/>
    <property type="resolution" value="2.65 A"/>
    <property type="chains" value="A/B/C/D/E/F/G/H=2-300"/>
</dbReference>
<dbReference type="PDBsum" id="8G9V"/>
<dbReference type="SMR" id="Q7Z5P4"/>
<dbReference type="BioGRID" id="131346">
    <property type="interactions" value="141"/>
</dbReference>
<dbReference type="FunCoup" id="Q7Z5P4">
    <property type="interactions" value="53"/>
</dbReference>
<dbReference type="IntAct" id="Q7Z5P4">
    <property type="interactions" value="125"/>
</dbReference>
<dbReference type="STRING" id="9606.ENSP00000333300"/>
<dbReference type="BindingDB" id="Q7Z5P4"/>
<dbReference type="ChEMBL" id="CHEMBL5305042"/>
<dbReference type="GlyCosmos" id="Q7Z5P4">
    <property type="glycosylation" value="1 site, 1 glycan"/>
</dbReference>
<dbReference type="GlyGen" id="Q7Z5P4">
    <property type="glycosylation" value="1 site, 1 O-linked glycan (1 site)"/>
</dbReference>
<dbReference type="iPTMnet" id="Q7Z5P4"/>
<dbReference type="PhosphoSitePlus" id="Q7Z5P4"/>
<dbReference type="BioMuta" id="HSD17B13"/>
<dbReference type="DMDM" id="74750138"/>
<dbReference type="jPOST" id="Q7Z5P4"/>
<dbReference type="MassIVE" id="Q7Z5P4"/>
<dbReference type="PaxDb" id="9606-ENSP00000333300"/>
<dbReference type="PeptideAtlas" id="Q7Z5P4"/>
<dbReference type="ProteomicsDB" id="69338">
    <molecule id="Q7Z5P4-1"/>
</dbReference>
<dbReference type="ProteomicsDB" id="69339">
    <molecule id="Q7Z5P4-2"/>
</dbReference>
<dbReference type="Antibodypedia" id="25413">
    <property type="antibodies" value="177 antibodies from 25 providers"/>
</dbReference>
<dbReference type="DNASU" id="345275"/>
<dbReference type="Ensembl" id="ENST00000302219.10">
    <molecule id="Q7Z5P4-2"/>
    <property type="protein sequence ID" value="ENSP00000305438.6"/>
    <property type="gene ID" value="ENSG00000170509.12"/>
</dbReference>
<dbReference type="Ensembl" id="ENST00000328546.5">
    <molecule id="Q7Z5P4-1"/>
    <property type="protein sequence ID" value="ENSP00000333300.4"/>
    <property type="gene ID" value="ENSG00000170509.12"/>
</dbReference>
<dbReference type="GeneID" id="345275"/>
<dbReference type="KEGG" id="hsa:345275"/>
<dbReference type="MANE-Select" id="ENST00000328546.5">
    <property type="protein sequence ID" value="ENSP00000333300.4"/>
    <property type="RefSeq nucleotide sequence ID" value="NM_178135.5"/>
    <property type="RefSeq protein sequence ID" value="NP_835236.2"/>
</dbReference>
<dbReference type="UCSC" id="uc003hqo.3">
    <molecule id="Q7Z5P4-1"/>
    <property type="organism name" value="human"/>
</dbReference>
<dbReference type="AGR" id="HGNC:18685"/>
<dbReference type="CTD" id="345275"/>
<dbReference type="DisGeNET" id="345275"/>
<dbReference type="GeneCards" id="HSD17B13"/>
<dbReference type="HGNC" id="HGNC:18685">
    <property type="gene designation" value="HSD17B13"/>
</dbReference>
<dbReference type="HPA" id="ENSG00000170509">
    <property type="expression patterns" value="Tissue enriched (liver)"/>
</dbReference>
<dbReference type="MalaCards" id="HSD17B13"/>
<dbReference type="MIM" id="612127">
    <property type="type" value="gene"/>
</dbReference>
<dbReference type="MIM" id="620116">
    <property type="type" value="phenotype"/>
</dbReference>
<dbReference type="neXtProt" id="NX_Q7Z5P4"/>
<dbReference type="OpenTargets" id="ENSG00000170509"/>
<dbReference type="PharmGKB" id="PA38634"/>
<dbReference type="VEuPathDB" id="HostDB:ENSG00000170509"/>
<dbReference type="eggNOG" id="KOG1201">
    <property type="taxonomic scope" value="Eukaryota"/>
</dbReference>
<dbReference type="GeneTree" id="ENSGT00940000161743"/>
<dbReference type="HOGENOM" id="CLU_010194_2_5_1"/>
<dbReference type="InParanoid" id="Q7Z5P4"/>
<dbReference type="OMA" id="RWTAYEF"/>
<dbReference type="OrthoDB" id="10253736at2759"/>
<dbReference type="PAN-GO" id="Q7Z5P4">
    <property type="GO annotations" value="3 GO annotations based on evolutionary models"/>
</dbReference>
<dbReference type="PhylomeDB" id="Q7Z5P4"/>
<dbReference type="TreeFam" id="TF312837"/>
<dbReference type="PathwayCommons" id="Q7Z5P4"/>
<dbReference type="Reactome" id="R-HSA-8964572">
    <property type="pathway name" value="Lipid particle organization"/>
</dbReference>
<dbReference type="SignaLink" id="Q7Z5P4"/>
<dbReference type="BioGRID-ORCS" id="345275">
    <property type="hits" value="10 hits in 1146 CRISPR screens"/>
</dbReference>
<dbReference type="ChiTaRS" id="HSD17B13">
    <property type="organism name" value="human"/>
</dbReference>
<dbReference type="GenomeRNAi" id="345275"/>
<dbReference type="Pharos" id="Q7Z5P4">
    <property type="development level" value="Tbio"/>
</dbReference>
<dbReference type="PRO" id="PR:Q7Z5P4"/>
<dbReference type="Proteomes" id="UP000005640">
    <property type="component" value="Chromosome 4"/>
</dbReference>
<dbReference type="RNAct" id="Q7Z5P4">
    <property type="molecule type" value="protein"/>
</dbReference>
<dbReference type="Bgee" id="ENSG00000170509">
    <property type="expression patterns" value="Expressed in liver and 91 other cell types or tissues"/>
</dbReference>
<dbReference type="GO" id="GO:0005829">
    <property type="term" value="C:cytosol"/>
    <property type="evidence" value="ECO:0000304"/>
    <property type="project" value="Reactome"/>
</dbReference>
<dbReference type="GO" id="GO:0005783">
    <property type="term" value="C:endoplasmic reticulum"/>
    <property type="evidence" value="ECO:0007669"/>
    <property type="project" value="UniProtKB-SubCell"/>
</dbReference>
<dbReference type="GO" id="GO:0005811">
    <property type="term" value="C:lipid droplet"/>
    <property type="evidence" value="ECO:0000314"/>
    <property type="project" value="MGI"/>
</dbReference>
<dbReference type="GO" id="GO:0004745">
    <property type="term" value="F:all-trans-retinol dehydrogenase (NAD+) activity"/>
    <property type="evidence" value="ECO:0007669"/>
    <property type="project" value="RHEA"/>
</dbReference>
<dbReference type="GO" id="GO:0004303">
    <property type="term" value="F:estradiol 17-beta-dehydrogenase [NAD(P)+] activity"/>
    <property type="evidence" value="ECO:0007669"/>
    <property type="project" value="RHEA"/>
</dbReference>
<dbReference type="GO" id="GO:0016616">
    <property type="term" value="F:oxidoreductase activity, acting on the CH-OH group of donors, NAD or NADP as acceptor"/>
    <property type="evidence" value="ECO:0000318"/>
    <property type="project" value="GO_Central"/>
</dbReference>
<dbReference type="GO" id="GO:0016229">
    <property type="term" value="F:steroid dehydrogenase activity"/>
    <property type="evidence" value="ECO:0000318"/>
    <property type="project" value="GO_Central"/>
</dbReference>
<dbReference type="GO" id="GO:0006629">
    <property type="term" value="P:lipid metabolic process"/>
    <property type="evidence" value="ECO:0007669"/>
    <property type="project" value="UniProtKB-KW"/>
</dbReference>
<dbReference type="GO" id="GO:0046889">
    <property type="term" value="P:positive regulation of lipid biosynthetic process"/>
    <property type="evidence" value="ECO:0000314"/>
    <property type="project" value="MGI"/>
</dbReference>
<dbReference type="CDD" id="cd05339">
    <property type="entry name" value="17beta-HSDXI-like_SDR_c"/>
    <property type="match status" value="1"/>
</dbReference>
<dbReference type="FunFam" id="3.40.50.720:FF:000224">
    <property type="entry name" value="Hydroxysteroid 17-beta dehydrogenase 11"/>
    <property type="match status" value="1"/>
</dbReference>
<dbReference type="Gene3D" id="3.40.50.720">
    <property type="entry name" value="NAD(P)-binding Rossmann-like Domain"/>
    <property type="match status" value="1"/>
</dbReference>
<dbReference type="InterPro" id="IPR036291">
    <property type="entry name" value="NAD(P)-bd_dom_sf"/>
</dbReference>
<dbReference type="InterPro" id="IPR002347">
    <property type="entry name" value="SDR_fam"/>
</dbReference>
<dbReference type="PANTHER" id="PTHR24322:SF499">
    <property type="entry name" value="17-BETA-HYDROXYSTEROID DEHYDROGENASE 13"/>
    <property type="match status" value="1"/>
</dbReference>
<dbReference type="PANTHER" id="PTHR24322">
    <property type="entry name" value="PKSB"/>
    <property type="match status" value="1"/>
</dbReference>
<dbReference type="Pfam" id="PF00106">
    <property type="entry name" value="adh_short"/>
    <property type="match status" value="1"/>
</dbReference>
<dbReference type="PRINTS" id="PR00081">
    <property type="entry name" value="GDHRDH"/>
</dbReference>
<dbReference type="PRINTS" id="PR00080">
    <property type="entry name" value="SDRFAMILY"/>
</dbReference>
<dbReference type="SUPFAM" id="SSF51735">
    <property type="entry name" value="NAD(P)-binding Rossmann-fold domains"/>
    <property type="match status" value="1"/>
</dbReference>
<gene>
    <name evidence="18" type="primary">HSD17B13</name>
    <name evidence="12" type="synonym">SCDR9</name>
    <name type="synonym">SDR16C3</name>
    <name type="ORF">HMFN0376</name>
    <name type="ORF">UNQ497/PRO1014</name>
</gene>
<evidence type="ECO:0000250" key="1"/>
<evidence type="ECO:0000250" key="2">
    <source>
        <dbReference type="UniProtKB" id="Q5M875"/>
    </source>
</evidence>
<evidence type="ECO:0000250" key="3">
    <source>
        <dbReference type="UniProtKB" id="Q8VCR2"/>
    </source>
</evidence>
<evidence type="ECO:0000255" key="4"/>
<evidence type="ECO:0000269" key="5">
    <source>
    </source>
</evidence>
<evidence type="ECO:0000269" key="6">
    <source>
    </source>
</evidence>
<evidence type="ECO:0000269" key="7">
    <source>
    </source>
</evidence>
<evidence type="ECO:0000269" key="8">
    <source>
    </source>
</evidence>
<evidence type="ECO:0000269" key="9">
    <source>
    </source>
</evidence>
<evidence type="ECO:0000269" key="10">
    <source ref="1"/>
</evidence>
<evidence type="ECO:0000303" key="11">
    <source>
    </source>
</evidence>
<evidence type="ECO:0000303" key="12">
    <source>
    </source>
</evidence>
<evidence type="ECO:0000303" key="13">
    <source>
    </source>
</evidence>
<evidence type="ECO:0000303" key="14">
    <source>
    </source>
</evidence>
<evidence type="ECO:0000303" key="15">
    <source ref="1"/>
</evidence>
<evidence type="ECO:0000305" key="16"/>
<evidence type="ECO:0000305" key="17">
    <source>
    </source>
</evidence>
<evidence type="ECO:0000312" key="18">
    <source>
        <dbReference type="HGNC" id="HGNC:18685"/>
    </source>
</evidence>
<evidence type="ECO:0007829" key="19">
    <source>
        <dbReference type="PDB" id="8G9V"/>
    </source>
</evidence>
<reference key="1">
    <citation type="submission" date="2002-11" db="EMBL/GenBank/DDBJ databases">
        <title>Molecular cloning and expression of a novel and tissue specific 17-beta hydroxysteroid dehydrogenase.</title>
        <authorList>
            <person name="Zhong H."/>
            <person name="Wang R."/>
        </authorList>
    </citation>
    <scope>NUCLEOTIDE SEQUENCE [MRNA] (ISOFORMS 1 AND 2)</scope>
    <scope>VARIANT SER-260</scope>
</reference>
<reference key="2">
    <citation type="journal article" date="2007" name="Acta Biochim. Pol.">
        <title>Molecular cloning and expression analysis of a new gene for short-chain dehydrogenase/reductase 9.</title>
        <authorList>
            <person name="Liu S."/>
            <person name="Huang C."/>
            <person name="Li D."/>
            <person name="Ren W."/>
            <person name="Zhang H."/>
            <person name="Qi M."/>
            <person name="Li X."/>
            <person name="Yu L."/>
        </authorList>
    </citation>
    <scope>NUCLEOTIDE SEQUENCE [MRNA] (ISOFORM 2)</scope>
    <scope>TISSUE SPECIFICITY</scope>
    <source>
        <tissue>Liver</tissue>
    </source>
</reference>
<reference key="3">
    <citation type="journal article" date="2003" name="Genome Res.">
        <title>The secreted protein discovery initiative (SPDI), a large-scale effort to identify novel human secreted and transmembrane proteins: a bioinformatics assessment.</title>
        <authorList>
            <person name="Clark H.F."/>
            <person name="Gurney A.L."/>
            <person name="Abaya E."/>
            <person name="Baker K."/>
            <person name="Baldwin D.T."/>
            <person name="Brush J."/>
            <person name="Chen J."/>
            <person name="Chow B."/>
            <person name="Chui C."/>
            <person name="Crowley C."/>
            <person name="Currell B."/>
            <person name="Deuel B."/>
            <person name="Dowd P."/>
            <person name="Eaton D."/>
            <person name="Foster J.S."/>
            <person name="Grimaldi C."/>
            <person name="Gu Q."/>
            <person name="Hass P.E."/>
            <person name="Heldens S."/>
            <person name="Huang A."/>
            <person name="Kim H.S."/>
            <person name="Klimowski L."/>
            <person name="Jin Y."/>
            <person name="Johnson S."/>
            <person name="Lee J."/>
            <person name="Lewis L."/>
            <person name="Liao D."/>
            <person name="Mark M.R."/>
            <person name="Robbie E."/>
            <person name="Sanchez C."/>
            <person name="Schoenfeld J."/>
            <person name="Seshagiri S."/>
            <person name="Simmons L."/>
            <person name="Singh J."/>
            <person name="Smith V."/>
            <person name="Stinson J."/>
            <person name="Vagts A."/>
            <person name="Vandlen R.L."/>
            <person name="Watanabe C."/>
            <person name="Wieand D."/>
            <person name="Woods K."/>
            <person name="Xie M.-H."/>
            <person name="Yansura D.G."/>
            <person name="Yi S."/>
            <person name="Yu G."/>
            <person name="Yuan J."/>
            <person name="Zhang M."/>
            <person name="Zhang Z."/>
            <person name="Goddard A.D."/>
            <person name="Wood W.I."/>
            <person name="Godowski P.J."/>
            <person name="Gray A.M."/>
        </authorList>
    </citation>
    <scope>NUCLEOTIDE SEQUENCE [LARGE SCALE MRNA] (ISOFORM 2)</scope>
</reference>
<reference key="4">
    <citation type="journal article" date="2004" name="Oncogene">
        <title>Expression profiling and differential screening between hepatoblastomas and the corresponding normal livers: identification of high expression of the PLK1 oncogene as a poor-prognostic indicator of hepatoblastomas.</title>
        <authorList>
            <person name="Yamada S."/>
            <person name="Ohira M."/>
            <person name="Horie H."/>
            <person name="Ando K."/>
            <person name="Takayasu H."/>
            <person name="Suzuki Y."/>
            <person name="Sugano S."/>
            <person name="Hirata T."/>
            <person name="Goto T."/>
            <person name="Matsunaga T."/>
            <person name="Hiyama E."/>
            <person name="Hayashi Y."/>
            <person name="Ando H."/>
            <person name="Suita S."/>
            <person name="Kaneko M."/>
            <person name="Sasaki F."/>
            <person name="Hashizume K."/>
            <person name="Ohnuma N."/>
            <person name="Nakagawara A."/>
        </authorList>
    </citation>
    <scope>NUCLEOTIDE SEQUENCE [LARGE SCALE MRNA] (ISOFORM 2)</scope>
    <source>
        <tissue>Hepatoblastoma</tissue>
    </source>
</reference>
<reference key="5">
    <citation type="journal article" date="2004" name="Nat. Genet.">
        <title>Complete sequencing and characterization of 21,243 full-length human cDNAs.</title>
        <authorList>
            <person name="Ota T."/>
            <person name="Suzuki Y."/>
            <person name="Nishikawa T."/>
            <person name="Otsuki T."/>
            <person name="Sugiyama T."/>
            <person name="Irie R."/>
            <person name="Wakamatsu A."/>
            <person name="Hayashi K."/>
            <person name="Sato H."/>
            <person name="Nagai K."/>
            <person name="Kimura K."/>
            <person name="Makita H."/>
            <person name="Sekine M."/>
            <person name="Obayashi M."/>
            <person name="Nishi T."/>
            <person name="Shibahara T."/>
            <person name="Tanaka T."/>
            <person name="Ishii S."/>
            <person name="Yamamoto J."/>
            <person name="Saito K."/>
            <person name="Kawai Y."/>
            <person name="Isono Y."/>
            <person name="Nakamura Y."/>
            <person name="Nagahari K."/>
            <person name="Murakami K."/>
            <person name="Yasuda T."/>
            <person name="Iwayanagi T."/>
            <person name="Wagatsuma M."/>
            <person name="Shiratori A."/>
            <person name="Sudo H."/>
            <person name="Hosoiri T."/>
            <person name="Kaku Y."/>
            <person name="Kodaira H."/>
            <person name="Kondo H."/>
            <person name="Sugawara M."/>
            <person name="Takahashi M."/>
            <person name="Kanda K."/>
            <person name="Yokoi T."/>
            <person name="Furuya T."/>
            <person name="Kikkawa E."/>
            <person name="Omura Y."/>
            <person name="Abe K."/>
            <person name="Kamihara K."/>
            <person name="Katsuta N."/>
            <person name="Sato K."/>
            <person name="Tanikawa M."/>
            <person name="Yamazaki M."/>
            <person name="Ninomiya K."/>
            <person name="Ishibashi T."/>
            <person name="Yamashita H."/>
            <person name="Murakawa K."/>
            <person name="Fujimori K."/>
            <person name="Tanai H."/>
            <person name="Kimata M."/>
            <person name="Watanabe M."/>
            <person name="Hiraoka S."/>
            <person name="Chiba Y."/>
            <person name="Ishida S."/>
            <person name="Ono Y."/>
            <person name="Takiguchi S."/>
            <person name="Watanabe S."/>
            <person name="Yosida M."/>
            <person name="Hotuta T."/>
            <person name="Kusano J."/>
            <person name="Kanehori K."/>
            <person name="Takahashi-Fujii A."/>
            <person name="Hara H."/>
            <person name="Tanase T.-O."/>
            <person name="Nomura Y."/>
            <person name="Togiya S."/>
            <person name="Komai F."/>
            <person name="Hara R."/>
            <person name="Takeuchi K."/>
            <person name="Arita M."/>
            <person name="Imose N."/>
            <person name="Musashino K."/>
            <person name="Yuuki H."/>
            <person name="Oshima A."/>
            <person name="Sasaki N."/>
            <person name="Aotsuka S."/>
            <person name="Yoshikawa Y."/>
            <person name="Matsunawa H."/>
            <person name="Ichihara T."/>
            <person name="Shiohata N."/>
            <person name="Sano S."/>
            <person name="Moriya S."/>
            <person name="Momiyama H."/>
            <person name="Satoh N."/>
            <person name="Takami S."/>
            <person name="Terashima Y."/>
            <person name="Suzuki O."/>
            <person name="Nakagawa S."/>
            <person name="Senoh A."/>
            <person name="Mizoguchi H."/>
            <person name="Goto Y."/>
            <person name="Shimizu F."/>
            <person name="Wakebe H."/>
            <person name="Hishigaki H."/>
            <person name="Watanabe T."/>
            <person name="Sugiyama A."/>
            <person name="Takemoto M."/>
            <person name="Kawakami B."/>
            <person name="Yamazaki M."/>
            <person name="Watanabe K."/>
            <person name="Kumagai A."/>
            <person name="Itakura S."/>
            <person name="Fukuzumi Y."/>
            <person name="Fujimori Y."/>
            <person name="Komiyama M."/>
            <person name="Tashiro H."/>
            <person name="Tanigami A."/>
            <person name="Fujiwara T."/>
            <person name="Ono T."/>
            <person name="Yamada K."/>
            <person name="Fujii Y."/>
            <person name="Ozaki K."/>
            <person name="Hirao M."/>
            <person name="Ohmori Y."/>
            <person name="Kawabata A."/>
            <person name="Hikiji T."/>
            <person name="Kobatake N."/>
            <person name="Inagaki H."/>
            <person name="Ikema Y."/>
            <person name="Okamoto S."/>
            <person name="Okitani R."/>
            <person name="Kawakami T."/>
            <person name="Noguchi S."/>
            <person name="Itoh T."/>
            <person name="Shigeta K."/>
            <person name="Senba T."/>
            <person name="Matsumura K."/>
            <person name="Nakajima Y."/>
            <person name="Mizuno T."/>
            <person name="Morinaga M."/>
            <person name="Sasaki M."/>
            <person name="Togashi T."/>
            <person name="Oyama M."/>
            <person name="Hata H."/>
            <person name="Watanabe M."/>
            <person name="Komatsu T."/>
            <person name="Mizushima-Sugano J."/>
            <person name="Satoh T."/>
            <person name="Shirai Y."/>
            <person name="Takahashi Y."/>
            <person name="Nakagawa K."/>
            <person name="Okumura K."/>
            <person name="Nagase T."/>
            <person name="Nomura N."/>
            <person name="Kikuchi H."/>
            <person name="Masuho Y."/>
            <person name="Yamashita R."/>
            <person name="Nakai K."/>
            <person name="Yada T."/>
            <person name="Nakamura Y."/>
            <person name="Ohara O."/>
            <person name="Isogai T."/>
            <person name="Sugano S."/>
        </authorList>
    </citation>
    <scope>NUCLEOTIDE SEQUENCE [LARGE SCALE MRNA] (ISOFORM 2)</scope>
    <source>
        <tissue>Trachea</tissue>
    </source>
</reference>
<reference key="6">
    <citation type="submission" date="2005-07" db="EMBL/GenBank/DDBJ databases">
        <authorList>
            <person name="Mural R.J."/>
            <person name="Istrail S."/>
            <person name="Sutton G.G."/>
            <person name="Florea L."/>
            <person name="Halpern A.L."/>
            <person name="Mobarry C.M."/>
            <person name="Lippert R."/>
            <person name="Walenz B."/>
            <person name="Shatkay H."/>
            <person name="Dew I."/>
            <person name="Miller J.R."/>
            <person name="Flanigan M.J."/>
            <person name="Edwards N.J."/>
            <person name="Bolanos R."/>
            <person name="Fasulo D."/>
            <person name="Halldorsson B.V."/>
            <person name="Hannenhalli S."/>
            <person name="Turner R."/>
            <person name="Yooseph S."/>
            <person name="Lu F."/>
            <person name="Nusskern D.R."/>
            <person name="Shue B.C."/>
            <person name="Zheng X.H."/>
            <person name="Zhong F."/>
            <person name="Delcher A.L."/>
            <person name="Huson D.H."/>
            <person name="Kravitz S.A."/>
            <person name="Mouchard L."/>
            <person name="Reinert K."/>
            <person name="Remington K.A."/>
            <person name="Clark A.G."/>
            <person name="Waterman M.S."/>
            <person name="Eichler E.E."/>
            <person name="Adams M.D."/>
            <person name="Hunkapiller M.W."/>
            <person name="Myers E.W."/>
            <person name="Venter J.C."/>
        </authorList>
    </citation>
    <scope>NUCLEOTIDE SEQUENCE [LARGE SCALE GENOMIC DNA]</scope>
</reference>
<reference key="7">
    <citation type="journal article" date="2004" name="Genome Res.">
        <title>The status, quality, and expansion of the NIH full-length cDNA project: the Mammalian Gene Collection (MGC).</title>
        <authorList>
            <consortium name="The MGC Project Team"/>
        </authorList>
    </citation>
    <scope>NUCLEOTIDE SEQUENCE [LARGE SCALE MRNA] (ISOFORM 1)</scope>
</reference>
<reference key="8">
    <citation type="journal article" date="2014" name="J. Proteomics">
        <title>An enzyme assisted RP-RPLC approach for in-depth analysis of human liver phosphoproteome.</title>
        <authorList>
            <person name="Bian Y."/>
            <person name="Song C."/>
            <person name="Cheng K."/>
            <person name="Dong M."/>
            <person name="Wang F."/>
            <person name="Huang J."/>
            <person name="Sun D."/>
            <person name="Wang L."/>
            <person name="Ye M."/>
            <person name="Zou H."/>
        </authorList>
    </citation>
    <scope>IDENTIFICATION BY MASS SPECTROMETRY [LARGE SCALE ANALYSIS]</scope>
    <source>
        <tissue>Liver</tissue>
    </source>
</reference>
<reference key="9">
    <citation type="journal article" date="2018" name="N. Engl. J. Med.">
        <title>A protein-truncating HSD17B13 variant and protection from chronic liver disease.</title>
        <authorList>
            <person name="Abul-Husn N.S."/>
            <person name="Cheng X."/>
            <person name="Li A.H."/>
            <person name="Xin Y."/>
            <person name="Schurmann C."/>
            <person name="Stevis P."/>
            <person name="Liu Y."/>
            <person name="Kozlitina J."/>
            <person name="Stender S."/>
            <person name="Wood G.C."/>
            <person name="Stepanchick A.N."/>
            <person name="Still M.D."/>
            <person name="McCarthy S."/>
            <person name="O'Dushlaine C."/>
            <person name="Packer J.S."/>
            <person name="Balasubramanian S."/>
            <person name="Gosalia N."/>
            <person name="Esopi D."/>
            <person name="Kim S.Y."/>
            <person name="Mukherjee S."/>
            <person name="Lopez A.E."/>
            <person name="Fuller E.D."/>
            <person name="Penn J."/>
            <person name="Chu X."/>
            <person name="Luo J.Z."/>
            <person name="Mirshahi U.L."/>
            <person name="Carey D.J."/>
            <person name="Still C.D."/>
            <person name="Feldman M.D."/>
            <person name="Small A."/>
            <person name="Damrauer S.M."/>
            <person name="Rader D.J."/>
            <person name="Zambrowicz B."/>
            <person name="Olson W."/>
            <person name="Murphy A.J."/>
            <person name="Borecki I.B."/>
            <person name="Shuldiner A.R."/>
            <person name="Reid J.G."/>
            <person name="Overton J.D."/>
            <person name="Yancopoulos G.D."/>
            <person name="Hobbs H.H."/>
            <person name="Cohen J.C."/>
            <person name="Gottesman O."/>
            <person name="Teslovich T.M."/>
            <person name="Baras A."/>
            <person name="Mirshahi T."/>
            <person name="Gromada J."/>
            <person name="Dewey F.E."/>
        </authorList>
    </citation>
    <scope>FUNCTION</scope>
    <scope>SUBCELLULAR LOCATION</scope>
    <scope>CATALYTIC ACTIVITY</scope>
    <scope>BIOPHYSICOCHEMICAL PROPERTIES</scope>
    <scope>TISSUE SPECIFICITY</scope>
    <scope>POLYMORPHISM</scope>
</reference>
<reference key="10">
    <citation type="journal article" date="2019" name="Hepatology">
        <title>17-Beta hydroxysteroid dehydrogenase 13 is a hepatic retinol dehydrogenase associated with histological features of nonalcoholic fatty liver disease.</title>
        <authorList>
            <consortium name="(for the Nonalcoholic Steatohepatitis Clinical Research Network)"/>
            <person name="Ma Y."/>
            <person name="Belyaeva O.V."/>
            <person name="Brown P.M."/>
            <person name="Fujita K."/>
            <person name="Valles K."/>
            <person name="Karki S."/>
            <person name="de Boer Y.S."/>
            <person name="Koh C."/>
            <person name="Chen Y."/>
            <person name="Du X."/>
            <person name="Handelman S.K."/>
            <person name="Chen V."/>
            <person name="Speliotes E.K."/>
            <person name="Nestlerode C."/>
            <person name="Thomas E."/>
            <person name="Kleiner D.E."/>
            <person name="Zmuda J.M."/>
            <person name="Sanyal A.J."/>
            <person name="Kedishvili N.Y."/>
            <person name="Liang T.J."/>
            <person name="Rotman Y."/>
        </authorList>
    </citation>
    <scope>FUNCTION</scope>
    <scope>SUBCELLULAR LOCATION</scope>
    <scope>CATALYTIC ACTIVITY</scope>
    <scope>MUTAGENESIS OF 22-LEU--PRO-28 AND 47-GLY--GLY-49</scope>
    <scope>CHARACTERIZATION OF VARIANT SER-260</scope>
</reference>
<reference key="11">
    <citation type="journal article" date="2020" name="J. Lipid Res.">
        <title>Characterization of essential domains in HSD17B13 for cellular localization and enzymatic activity.</title>
        <authorList>
            <person name="Ma Y."/>
            <person name="Karki S."/>
            <person name="Brown P.M."/>
            <person name="Lin D.D."/>
            <person name="Podszun M.C."/>
            <person name="Zhou W."/>
            <person name="Belyaeva O.V."/>
            <person name="Kedishvili N.Y."/>
            <person name="Rotman Y."/>
        </authorList>
    </citation>
    <scope>FUNCTION</scope>
    <scope>SUBCELLULAR LOCATION</scope>
    <scope>CATALYTIC ACTIVITY</scope>
    <scope>MUTAGENESIS OF 69-ASN--GLY-84; 85-VAL--ASP-93; 94-CYS--GLN-106; ARG-97; TYR-101; ASN-144; LYS-153; LEU-156; SER-172; TYR-185; LYS-189; LEU-199; GLU-202 AND LYS-208</scope>
</reference>
<reference key="12">
    <citation type="journal article" date="2021" name="BMC Gastroenterol.">
        <title>Association of HSD17B13 rs72613567: TA allelic variant with liver disease: review and meta-analysis.</title>
        <authorList>
            <person name="Tang S."/>
            <person name="Zhang J."/>
            <person name="Mei T.T."/>
            <person name="Zhang W.Y."/>
            <person name="Zheng S.J."/>
            <person name="Yu H.B."/>
        </authorList>
    </citation>
    <scope>POLYMORPHISM</scope>
</reference>
<proteinExistence type="evidence at protein level"/>
<protein>
    <recommendedName>
        <fullName evidence="14">17-beta-hydroxysteroid dehydrogenase 13</fullName>
        <shortName>17-beta-HSD 13</shortName>
        <ecNumber evidence="6">1.1.1.-</ecNumber>
        <ecNumber evidence="6">1.1.1.62</ecNumber>
    </recommendedName>
    <alternativeName>
        <fullName evidence="17">Hepatic retinol/retinal dehydrogenase</fullName>
        <ecNumber evidence="7 8">1.1.1.105</ecNumber>
    </alternativeName>
    <alternativeName>
        <fullName>Short chain dehydrogenase/reductase family 16C member 3</fullName>
    </alternativeName>
    <alternativeName>
        <fullName evidence="12">Short-chain dehydrogenase/reductase 9</fullName>
    </alternativeName>
</protein>